<keyword id="KW-0963">Cytoplasm</keyword>
<keyword id="KW-0378">Hydrolase</keyword>
<keyword id="KW-0464">Manganese</keyword>
<keyword id="KW-0479">Metal-binding</keyword>
<keyword id="KW-1185">Reference proteome</keyword>
<evidence type="ECO:0000250" key="1"/>
<evidence type="ECO:0000305" key="2"/>
<reference key="1">
    <citation type="journal article" date="1997" name="Nature">
        <title>The complete genome sequence of the hyperthermophilic, sulphate-reducing archaeon Archaeoglobus fulgidus.</title>
        <authorList>
            <person name="Klenk H.-P."/>
            <person name="Clayton R.A."/>
            <person name="Tomb J.-F."/>
            <person name="White O."/>
            <person name="Nelson K.E."/>
            <person name="Ketchum K.A."/>
            <person name="Dodson R.J."/>
            <person name="Gwinn M.L."/>
            <person name="Hickey E.K."/>
            <person name="Peterson J.D."/>
            <person name="Richardson D.L."/>
            <person name="Kerlavage A.R."/>
            <person name="Graham D.E."/>
            <person name="Kyrpides N.C."/>
            <person name="Fleischmann R.D."/>
            <person name="Quackenbush J."/>
            <person name="Lee N.H."/>
            <person name="Sutton G.G."/>
            <person name="Gill S.R."/>
            <person name="Kirkness E.F."/>
            <person name="Dougherty B.A."/>
            <person name="McKenney K."/>
            <person name="Adams M.D."/>
            <person name="Loftus B.J."/>
            <person name="Peterson S.N."/>
            <person name="Reich C.I."/>
            <person name="McNeil L.K."/>
            <person name="Badger J.H."/>
            <person name="Glodek A."/>
            <person name="Zhou L."/>
            <person name="Overbeek R."/>
            <person name="Gocayne J.D."/>
            <person name="Weidman J.F."/>
            <person name="McDonald L.A."/>
            <person name="Utterback T.R."/>
            <person name="Cotton M.D."/>
            <person name="Spriggs T."/>
            <person name="Artiach P."/>
            <person name="Kaine B.P."/>
            <person name="Sykes S.M."/>
            <person name="Sadow P.W."/>
            <person name="D'Andrea K.P."/>
            <person name="Bowman C."/>
            <person name="Fujii C."/>
            <person name="Garland S.A."/>
            <person name="Mason T.M."/>
            <person name="Olsen G.J."/>
            <person name="Fraser C.M."/>
            <person name="Smith H.O."/>
            <person name="Woese C.R."/>
            <person name="Venter J.C."/>
        </authorList>
    </citation>
    <scope>NUCLEOTIDE SEQUENCE [LARGE SCALE GENOMIC DNA]</scope>
    <source>
        <strain>ATCC 49558 / DSM 4304 / JCM 9628 / NBRC 100126 / VC-16</strain>
    </source>
</reference>
<organism>
    <name type="scientific">Archaeoglobus fulgidus (strain ATCC 49558 / DSM 4304 / JCM 9628 / NBRC 100126 / VC-16)</name>
    <dbReference type="NCBI Taxonomy" id="224325"/>
    <lineage>
        <taxon>Archaea</taxon>
        <taxon>Methanobacteriati</taxon>
        <taxon>Methanobacteriota</taxon>
        <taxon>Archaeoglobi</taxon>
        <taxon>Archaeoglobales</taxon>
        <taxon>Archaeoglobaceae</taxon>
        <taxon>Archaeoglobus</taxon>
    </lineage>
</organism>
<feature type="chain" id="PRO_0000158598" description="Probable manganese-dependent inorganic pyrophosphatase">
    <location>
        <begin position="1"/>
        <end position="322"/>
    </location>
</feature>
<feature type="binding site" evidence="1">
    <location>
        <position position="10"/>
    </location>
    <ligand>
        <name>Mn(2+)</name>
        <dbReference type="ChEBI" id="CHEBI:29035"/>
        <label>1</label>
    </ligand>
</feature>
<feature type="binding site" evidence="1">
    <location>
        <position position="14"/>
    </location>
    <ligand>
        <name>Mn(2+)</name>
        <dbReference type="ChEBI" id="CHEBI:29035"/>
        <label>1</label>
    </ligand>
</feature>
<feature type="binding site" evidence="1">
    <location>
        <position position="16"/>
    </location>
    <ligand>
        <name>Mn(2+)</name>
        <dbReference type="ChEBI" id="CHEBI:29035"/>
        <label>2</label>
    </ligand>
</feature>
<feature type="binding site" evidence="1">
    <location>
        <position position="86"/>
    </location>
    <ligand>
        <name>Mn(2+)</name>
        <dbReference type="ChEBI" id="CHEBI:29035"/>
        <label>1</label>
    </ligand>
</feature>
<feature type="binding site" evidence="1">
    <location>
        <position position="86"/>
    </location>
    <ligand>
        <name>Mn(2+)</name>
        <dbReference type="ChEBI" id="CHEBI:29035"/>
        <label>2</label>
    </ligand>
</feature>
<feature type="binding site" evidence="1">
    <location>
        <position position="108"/>
    </location>
    <ligand>
        <name>Mn(2+)</name>
        <dbReference type="ChEBI" id="CHEBI:29035"/>
        <label>2</label>
    </ligand>
</feature>
<feature type="binding site" evidence="1">
    <location>
        <position position="160"/>
    </location>
    <ligand>
        <name>Mn(2+)</name>
        <dbReference type="ChEBI" id="CHEBI:29035"/>
        <label>2</label>
    </ligand>
</feature>
<proteinExistence type="inferred from homology"/>
<protein>
    <recommendedName>
        <fullName>Probable manganese-dependent inorganic pyrophosphatase</fullName>
        <ecNumber>3.6.1.1</ecNumber>
    </recommendedName>
    <alternativeName>
        <fullName>Pyrophosphate phospho-hydrolase</fullName>
        <shortName>PPase</shortName>
    </alternativeName>
</protein>
<comment type="catalytic activity">
    <reaction>
        <text>diphosphate + H2O = 2 phosphate + H(+)</text>
        <dbReference type="Rhea" id="RHEA:24576"/>
        <dbReference type="ChEBI" id="CHEBI:15377"/>
        <dbReference type="ChEBI" id="CHEBI:15378"/>
        <dbReference type="ChEBI" id="CHEBI:33019"/>
        <dbReference type="ChEBI" id="CHEBI:43474"/>
        <dbReference type="EC" id="3.6.1.1"/>
    </reaction>
</comment>
<comment type="cofactor">
    <cofactor evidence="1">
        <name>Mn(2+)</name>
        <dbReference type="ChEBI" id="CHEBI:29035"/>
    </cofactor>
    <text evidence="1">Binds 2 manganese ions per subunit.</text>
</comment>
<comment type="subcellular location">
    <subcellularLocation>
        <location evidence="1">Cytoplasm</location>
    </subcellularLocation>
</comment>
<comment type="similarity">
    <text evidence="2">Belongs to the PPase class C family.</text>
</comment>
<name>PPAC_ARCFU</name>
<accession>O29502</accession>
<sequence>MEHVVYVVGHKNPDTDSVCSAIAFAYLWNKWKEGGNVAKMMKIEAEAKPVIQGDVNPETKYVLEKFGFEVPEIMTNGEGKKVALVDHSEKAQTVDGIDKAEVVAIVDHHKIGDVTTPQPILFVNLPVGCTATVIKLLFDKTGVEIPKDIAGILLSSILSDTVIFKSATTTELDKEVAEELAKIAGIDDLTKFGVEIKAKLSAVDDLTAMDIIKRDYKDFDMSGKKVGVGQIELVDLSLIESRIDEIYEAMKKMKEEGGYAGIFLMLTDIMKEGTELLVVTDYPEVVEKAFGKKLEGKSVWLDGVMSRKKQVVPPLEKAFAEL</sequence>
<dbReference type="EC" id="3.6.1.1"/>
<dbReference type="EMBL" id="AE000782">
    <property type="protein sequence ID" value="AAB90480.1"/>
    <property type="molecule type" value="Genomic_DNA"/>
</dbReference>
<dbReference type="PIR" id="D69344">
    <property type="entry name" value="D69344"/>
</dbReference>
<dbReference type="RefSeq" id="WP_010878259.1">
    <property type="nucleotide sequence ID" value="NC_000917.1"/>
</dbReference>
<dbReference type="SMR" id="O29502"/>
<dbReference type="STRING" id="224325.AF_0756"/>
<dbReference type="PaxDb" id="224325-AF_0756"/>
<dbReference type="EnsemblBacteria" id="AAB90480">
    <property type="protein sequence ID" value="AAB90480"/>
    <property type="gene ID" value="AF_0756"/>
</dbReference>
<dbReference type="KEGG" id="afu:AF_0756"/>
<dbReference type="eggNOG" id="arCOG01567">
    <property type="taxonomic scope" value="Archaea"/>
</dbReference>
<dbReference type="HOGENOM" id="CLU_025243_0_1_2"/>
<dbReference type="OrthoDB" id="114945at2157"/>
<dbReference type="PhylomeDB" id="O29502"/>
<dbReference type="Proteomes" id="UP000002199">
    <property type="component" value="Chromosome"/>
</dbReference>
<dbReference type="GO" id="GO:0005737">
    <property type="term" value="C:cytoplasm"/>
    <property type="evidence" value="ECO:0007669"/>
    <property type="project" value="UniProtKB-SubCell"/>
</dbReference>
<dbReference type="GO" id="GO:0004427">
    <property type="term" value="F:inorganic diphosphate phosphatase activity"/>
    <property type="evidence" value="ECO:0007669"/>
    <property type="project" value="UniProtKB-UniRule"/>
</dbReference>
<dbReference type="GO" id="GO:0030145">
    <property type="term" value="F:manganese ion binding"/>
    <property type="evidence" value="ECO:0007669"/>
    <property type="project" value="UniProtKB-UniRule"/>
</dbReference>
<dbReference type="FunFam" id="3.90.1640.10:FF:000001">
    <property type="entry name" value="Probable manganese-dependent inorganic pyrophosphatase"/>
    <property type="match status" value="1"/>
</dbReference>
<dbReference type="Gene3D" id="3.10.310.20">
    <property type="entry name" value="DHHA2 domain"/>
    <property type="match status" value="1"/>
</dbReference>
<dbReference type="Gene3D" id="3.90.1640.10">
    <property type="entry name" value="inorganic pyrophosphatase (n-terminal core)"/>
    <property type="match status" value="1"/>
</dbReference>
<dbReference type="HAMAP" id="MF_00207">
    <property type="entry name" value="PPase_C"/>
    <property type="match status" value="1"/>
</dbReference>
<dbReference type="InterPro" id="IPR001667">
    <property type="entry name" value="DDH_dom"/>
</dbReference>
<dbReference type="InterPro" id="IPR038763">
    <property type="entry name" value="DHH_sf"/>
</dbReference>
<dbReference type="InterPro" id="IPR004097">
    <property type="entry name" value="DHHA2"/>
</dbReference>
<dbReference type="InterPro" id="IPR038222">
    <property type="entry name" value="DHHA2_dom_sf"/>
</dbReference>
<dbReference type="InterPro" id="IPR022934">
    <property type="entry name" value="Mn-dep_inorganic_PyrPase"/>
</dbReference>
<dbReference type="NCBIfam" id="NF003877">
    <property type="entry name" value="PRK05427.1"/>
    <property type="match status" value="1"/>
</dbReference>
<dbReference type="PANTHER" id="PTHR12112">
    <property type="entry name" value="BNIP - RELATED"/>
    <property type="match status" value="1"/>
</dbReference>
<dbReference type="PANTHER" id="PTHR12112:SF22">
    <property type="entry name" value="MANGANESE-DEPENDENT INORGANIC PYROPHOSPHATASE-RELATED"/>
    <property type="match status" value="1"/>
</dbReference>
<dbReference type="Pfam" id="PF01368">
    <property type="entry name" value="DHH"/>
    <property type="match status" value="1"/>
</dbReference>
<dbReference type="Pfam" id="PF02833">
    <property type="entry name" value="DHHA2"/>
    <property type="match status" value="1"/>
</dbReference>
<dbReference type="SMART" id="SM01131">
    <property type="entry name" value="DHHA2"/>
    <property type="match status" value="1"/>
</dbReference>
<dbReference type="SUPFAM" id="SSF64182">
    <property type="entry name" value="DHH phosphoesterases"/>
    <property type="match status" value="1"/>
</dbReference>
<gene>
    <name type="primary">ppaC</name>
    <name type="ordered locus">AF_0756</name>
</gene>